<reference key="1">
    <citation type="journal article" date="2013" name="Nature">
        <title>The zebrafish reference genome sequence and its relationship to the human genome.</title>
        <authorList>
            <person name="Howe K."/>
            <person name="Clark M.D."/>
            <person name="Torroja C.F."/>
            <person name="Torrance J."/>
            <person name="Berthelot C."/>
            <person name="Muffato M."/>
            <person name="Collins J.E."/>
            <person name="Humphray S."/>
            <person name="McLaren K."/>
            <person name="Matthews L."/>
            <person name="McLaren S."/>
            <person name="Sealy I."/>
            <person name="Caccamo M."/>
            <person name="Churcher C."/>
            <person name="Scott C."/>
            <person name="Barrett J.C."/>
            <person name="Koch R."/>
            <person name="Rauch G.J."/>
            <person name="White S."/>
            <person name="Chow W."/>
            <person name="Kilian B."/>
            <person name="Quintais L.T."/>
            <person name="Guerra-Assuncao J.A."/>
            <person name="Zhou Y."/>
            <person name="Gu Y."/>
            <person name="Yen J."/>
            <person name="Vogel J.H."/>
            <person name="Eyre T."/>
            <person name="Redmond S."/>
            <person name="Banerjee R."/>
            <person name="Chi J."/>
            <person name="Fu B."/>
            <person name="Langley E."/>
            <person name="Maguire S.F."/>
            <person name="Laird G.K."/>
            <person name="Lloyd D."/>
            <person name="Kenyon E."/>
            <person name="Donaldson S."/>
            <person name="Sehra H."/>
            <person name="Almeida-King J."/>
            <person name="Loveland J."/>
            <person name="Trevanion S."/>
            <person name="Jones M."/>
            <person name="Quail M."/>
            <person name="Willey D."/>
            <person name="Hunt A."/>
            <person name="Burton J."/>
            <person name="Sims S."/>
            <person name="McLay K."/>
            <person name="Plumb B."/>
            <person name="Davis J."/>
            <person name="Clee C."/>
            <person name="Oliver K."/>
            <person name="Clark R."/>
            <person name="Riddle C."/>
            <person name="Elliot D."/>
            <person name="Threadgold G."/>
            <person name="Harden G."/>
            <person name="Ware D."/>
            <person name="Begum S."/>
            <person name="Mortimore B."/>
            <person name="Kerry G."/>
            <person name="Heath P."/>
            <person name="Phillimore B."/>
            <person name="Tracey A."/>
            <person name="Corby N."/>
            <person name="Dunn M."/>
            <person name="Johnson C."/>
            <person name="Wood J."/>
            <person name="Clark S."/>
            <person name="Pelan S."/>
            <person name="Griffiths G."/>
            <person name="Smith M."/>
            <person name="Glithero R."/>
            <person name="Howden P."/>
            <person name="Barker N."/>
            <person name="Lloyd C."/>
            <person name="Stevens C."/>
            <person name="Harley J."/>
            <person name="Holt K."/>
            <person name="Panagiotidis G."/>
            <person name="Lovell J."/>
            <person name="Beasley H."/>
            <person name="Henderson C."/>
            <person name="Gordon D."/>
            <person name="Auger K."/>
            <person name="Wright D."/>
            <person name="Collins J."/>
            <person name="Raisen C."/>
            <person name="Dyer L."/>
            <person name="Leung K."/>
            <person name="Robertson L."/>
            <person name="Ambridge K."/>
            <person name="Leongamornlert D."/>
            <person name="McGuire S."/>
            <person name="Gilderthorp R."/>
            <person name="Griffiths C."/>
            <person name="Manthravadi D."/>
            <person name="Nichol S."/>
            <person name="Barker G."/>
            <person name="Whitehead S."/>
            <person name="Kay M."/>
            <person name="Brown J."/>
            <person name="Murnane C."/>
            <person name="Gray E."/>
            <person name="Humphries M."/>
            <person name="Sycamore N."/>
            <person name="Barker D."/>
            <person name="Saunders D."/>
            <person name="Wallis J."/>
            <person name="Babbage A."/>
            <person name="Hammond S."/>
            <person name="Mashreghi-Mohammadi M."/>
            <person name="Barr L."/>
            <person name="Martin S."/>
            <person name="Wray P."/>
            <person name="Ellington A."/>
            <person name="Matthews N."/>
            <person name="Ellwood M."/>
            <person name="Woodmansey R."/>
            <person name="Clark G."/>
            <person name="Cooper J."/>
            <person name="Tromans A."/>
            <person name="Grafham D."/>
            <person name="Skuce C."/>
            <person name="Pandian R."/>
            <person name="Andrews R."/>
            <person name="Harrison E."/>
            <person name="Kimberley A."/>
            <person name="Garnett J."/>
            <person name="Fosker N."/>
            <person name="Hall R."/>
            <person name="Garner P."/>
            <person name="Kelly D."/>
            <person name="Bird C."/>
            <person name="Palmer S."/>
            <person name="Gehring I."/>
            <person name="Berger A."/>
            <person name="Dooley C.M."/>
            <person name="Ersan-Urun Z."/>
            <person name="Eser C."/>
            <person name="Geiger H."/>
            <person name="Geisler M."/>
            <person name="Karotki L."/>
            <person name="Kirn A."/>
            <person name="Konantz J."/>
            <person name="Konantz M."/>
            <person name="Oberlander M."/>
            <person name="Rudolph-Geiger S."/>
            <person name="Teucke M."/>
            <person name="Lanz C."/>
            <person name="Raddatz G."/>
            <person name="Osoegawa K."/>
            <person name="Zhu B."/>
            <person name="Rapp A."/>
            <person name="Widaa S."/>
            <person name="Langford C."/>
            <person name="Yang F."/>
            <person name="Schuster S.C."/>
            <person name="Carter N.P."/>
            <person name="Harrow J."/>
            <person name="Ning Z."/>
            <person name="Herrero J."/>
            <person name="Searle S.M."/>
            <person name="Enright A."/>
            <person name="Geisler R."/>
            <person name="Plasterk R.H."/>
            <person name="Lee C."/>
            <person name="Westerfield M."/>
            <person name="de Jong P.J."/>
            <person name="Zon L.I."/>
            <person name="Postlethwait J.H."/>
            <person name="Nusslein-Volhard C."/>
            <person name="Hubbard T.J."/>
            <person name="Roest Crollius H."/>
            <person name="Rogers J."/>
            <person name="Stemple D.L."/>
        </authorList>
    </citation>
    <scope>NUCLEOTIDE SEQUENCE [LARGE SCALE GENOMIC DNA]</scope>
    <source>
        <strain>Tuebingen</strain>
    </source>
</reference>
<reference key="2">
    <citation type="journal article" date="2010" name="Development">
        <title>Rfx6 is an Ngn3-dependent winged helix transcription factor required for pancreatic islet cell development.</title>
        <authorList>
            <person name="Soyer J."/>
            <person name="Flasse L."/>
            <person name="Raffelsberger W."/>
            <person name="Beucher A."/>
            <person name="Orvain C."/>
            <person name="Peers B."/>
            <person name="Ravassard P."/>
            <person name="Vermot J."/>
            <person name="Voz M.L."/>
            <person name="Mellitzer G."/>
            <person name="Gradwohl G."/>
        </authorList>
    </citation>
    <scope>FUNCTION</scope>
    <scope>TISSUE SPECIFICITY</scope>
    <scope>DISRUPTION PHENOTYPE</scope>
</reference>
<dbReference type="EMBL" id="BX000362">
    <property type="protein sequence ID" value="CAI21371.1"/>
    <property type="status" value="ALT_INIT"/>
    <property type="molecule type" value="Genomic_DNA"/>
</dbReference>
<dbReference type="SMR" id="Q5RJA1"/>
<dbReference type="FunCoup" id="Q5RJA1">
    <property type="interactions" value="47"/>
</dbReference>
<dbReference type="STRING" id="7955.ENSDARP00000116051"/>
<dbReference type="PaxDb" id="7955-ENSDARP00000116051"/>
<dbReference type="Ensembl" id="ENSDART00000061122">
    <property type="protein sequence ID" value="ENSDARP00000061121"/>
    <property type="gene ID" value="ENSDARG00000041702"/>
</dbReference>
<dbReference type="AGR" id="ZFIN:ZDB-GENE-041014-299"/>
<dbReference type="ZFIN" id="ZDB-GENE-041014-299">
    <property type="gene designation" value="rfx6"/>
</dbReference>
<dbReference type="eggNOG" id="KOG3712">
    <property type="taxonomic scope" value="Eukaryota"/>
</dbReference>
<dbReference type="HOGENOM" id="CLU_013981_0_0_1"/>
<dbReference type="InParanoid" id="Q5RJA1"/>
<dbReference type="PhylomeDB" id="Q5RJA1"/>
<dbReference type="TreeFam" id="TF321340"/>
<dbReference type="PRO" id="PR:Q5RJA1"/>
<dbReference type="Proteomes" id="UP000000437">
    <property type="component" value="Unplaced"/>
</dbReference>
<dbReference type="Bgee" id="ENSDARG00000041702">
    <property type="expression patterns" value="Expressed in pancreatic system and 8 other cell types or tissues"/>
</dbReference>
<dbReference type="GO" id="GO:0005634">
    <property type="term" value="C:nucleus"/>
    <property type="evidence" value="ECO:0000250"/>
    <property type="project" value="UniProtKB"/>
</dbReference>
<dbReference type="GO" id="GO:0000981">
    <property type="term" value="F:DNA-binding transcription factor activity, RNA polymerase II-specific"/>
    <property type="evidence" value="ECO:0000318"/>
    <property type="project" value="GO_Central"/>
</dbReference>
<dbReference type="GO" id="GO:0000978">
    <property type="term" value="F:RNA polymerase II cis-regulatory region sequence-specific DNA binding"/>
    <property type="evidence" value="ECO:0000318"/>
    <property type="project" value="GO_Central"/>
</dbReference>
<dbReference type="GO" id="GO:0000976">
    <property type="term" value="F:transcription cis-regulatory region binding"/>
    <property type="evidence" value="ECO:0000250"/>
    <property type="project" value="UniProtKB"/>
</dbReference>
<dbReference type="GO" id="GO:0031018">
    <property type="term" value="P:endocrine pancreas development"/>
    <property type="evidence" value="ECO:0000315"/>
    <property type="project" value="UniProtKB"/>
</dbReference>
<dbReference type="GO" id="GO:0042593">
    <property type="term" value="P:glucose homeostasis"/>
    <property type="evidence" value="ECO:0000250"/>
    <property type="project" value="UniProtKB"/>
</dbReference>
<dbReference type="GO" id="GO:0003310">
    <property type="term" value="P:pancreatic A cell differentiation"/>
    <property type="evidence" value="ECO:0000250"/>
    <property type="project" value="UniProtKB"/>
</dbReference>
<dbReference type="GO" id="GO:0003311">
    <property type="term" value="P:pancreatic D cell differentiation"/>
    <property type="evidence" value="ECO:0000250"/>
    <property type="project" value="UniProtKB"/>
</dbReference>
<dbReference type="GO" id="GO:0090104">
    <property type="term" value="P:pancreatic epsilon cell differentiation"/>
    <property type="evidence" value="ECO:0000250"/>
    <property type="project" value="UniProtKB"/>
</dbReference>
<dbReference type="GO" id="GO:0045893">
    <property type="term" value="P:positive regulation of DNA-templated transcription"/>
    <property type="evidence" value="ECO:0000250"/>
    <property type="project" value="UniProtKB"/>
</dbReference>
<dbReference type="GO" id="GO:0035774">
    <property type="term" value="P:positive regulation of insulin secretion involved in cellular response to glucose stimulus"/>
    <property type="evidence" value="ECO:0000250"/>
    <property type="project" value="UniProtKB"/>
</dbReference>
<dbReference type="GO" id="GO:0045944">
    <property type="term" value="P:positive regulation of transcription by RNA polymerase II"/>
    <property type="evidence" value="ECO:0000250"/>
    <property type="project" value="UniProtKB"/>
</dbReference>
<dbReference type="GO" id="GO:0050796">
    <property type="term" value="P:regulation of insulin secretion"/>
    <property type="evidence" value="ECO:0000250"/>
    <property type="project" value="UniProtKB"/>
</dbReference>
<dbReference type="GO" id="GO:0006357">
    <property type="term" value="P:regulation of transcription by RNA polymerase II"/>
    <property type="evidence" value="ECO:0000318"/>
    <property type="project" value="GO_Central"/>
</dbReference>
<dbReference type="GO" id="GO:0003309">
    <property type="term" value="P:type B pancreatic cell differentiation"/>
    <property type="evidence" value="ECO:0000250"/>
    <property type="project" value="UniProtKB"/>
</dbReference>
<dbReference type="FunFam" id="1.10.10.10:FF:000211">
    <property type="entry name" value="Regulatory factor X, 6"/>
    <property type="match status" value="1"/>
</dbReference>
<dbReference type="Gene3D" id="1.10.10.10">
    <property type="entry name" value="Winged helix-like DNA-binding domain superfamily/Winged helix DNA-binding domain"/>
    <property type="match status" value="1"/>
</dbReference>
<dbReference type="InterPro" id="IPR003150">
    <property type="entry name" value="DNA-bd_RFX"/>
</dbReference>
<dbReference type="InterPro" id="IPR039779">
    <property type="entry name" value="RFX-like"/>
</dbReference>
<dbReference type="InterPro" id="IPR036388">
    <property type="entry name" value="WH-like_DNA-bd_sf"/>
</dbReference>
<dbReference type="InterPro" id="IPR036390">
    <property type="entry name" value="WH_DNA-bd_sf"/>
</dbReference>
<dbReference type="PANTHER" id="PTHR12619:SF28">
    <property type="entry name" value="DNA-BINDING PROTEIN RFX6"/>
    <property type="match status" value="1"/>
</dbReference>
<dbReference type="PANTHER" id="PTHR12619">
    <property type="entry name" value="RFX TRANSCRIPTION FACTOR FAMILY"/>
    <property type="match status" value="1"/>
</dbReference>
<dbReference type="Pfam" id="PF25340">
    <property type="entry name" value="BCD_RFX"/>
    <property type="match status" value="1"/>
</dbReference>
<dbReference type="Pfam" id="PF02257">
    <property type="entry name" value="RFX_DNA_binding"/>
    <property type="match status" value="1"/>
</dbReference>
<dbReference type="SUPFAM" id="SSF46785">
    <property type="entry name" value="Winged helix' DNA-binding domain"/>
    <property type="match status" value="1"/>
</dbReference>
<dbReference type="PROSITE" id="PS51526">
    <property type="entry name" value="RFX_DBD"/>
    <property type="match status" value="1"/>
</dbReference>
<feature type="chain" id="PRO_0000392998" description="DNA-binding protein RFX6">
    <location>
        <begin position="1"/>
        <end position="848"/>
    </location>
</feature>
<feature type="DNA-binding region" description="RFX-type winged-helix" evidence="2">
    <location>
        <begin position="56"/>
        <end position="131"/>
    </location>
</feature>
<gene>
    <name type="primary">rfx6</name>
    <name type="ORF">si:dkeyp-93d12.2</name>
</gene>
<evidence type="ECO:0000250" key="1">
    <source>
        <dbReference type="UniProtKB" id="Q8HWS3"/>
    </source>
</evidence>
<evidence type="ECO:0000255" key="2">
    <source>
        <dbReference type="PROSITE-ProRule" id="PRU00858"/>
    </source>
</evidence>
<evidence type="ECO:0000269" key="3">
    <source>
    </source>
</evidence>
<evidence type="ECO:0000305" key="4"/>
<comment type="function">
    <text evidence="3">Transcription factor required to direct islet cell differentiation during endocrine pancreas development.</text>
</comment>
<comment type="subcellular location">
    <subcellularLocation>
        <location evidence="1">Nucleus</location>
    </subcellularLocation>
</comment>
<comment type="tissue specificity">
    <text evidence="3">Expressed in progenitors and hormone expressing cells of the islet lineage.</text>
</comment>
<comment type="disruption phenotype">
    <text evidence="3">Impaired endocrine cell differentiation and accumulation of islet progenitor cells.</text>
</comment>
<comment type="similarity">
    <text evidence="2">Belongs to the RFX family.</text>
</comment>
<comment type="sequence caution" evidence="4">
    <conflict type="erroneous initiation">
        <sequence resource="EMBL-CDS" id="CAI21371"/>
    </conflict>
</comment>
<proteinExistence type="evidence at transcript level"/>
<name>RFX6_DANRE</name>
<organism>
    <name type="scientific">Danio rerio</name>
    <name type="common">Zebrafish</name>
    <name type="synonym">Brachydanio rerio</name>
    <dbReference type="NCBI Taxonomy" id="7955"/>
    <lineage>
        <taxon>Eukaryota</taxon>
        <taxon>Metazoa</taxon>
        <taxon>Chordata</taxon>
        <taxon>Craniata</taxon>
        <taxon>Vertebrata</taxon>
        <taxon>Euteleostomi</taxon>
        <taxon>Actinopterygii</taxon>
        <taxon>Neopterygii</taxon>
        <taxon>Teleostei</taxon>
        <taxon>Ostariophysi</taxon>
        <taxon>Cypriniformes</taxon>
        <taxon>Danionidae</taxon>
        <taxon>Danioninae</taxon>
        <taxon>Danio</taxon>
    </lineage>
</organism>
<sequence length="848" mass="93762">MYVIHLAEADESNASISSEEDLGHLDYSKPFAAKQTQPKKSISQIIKDKKKQTQLTLQWLEDNYIVCEGVCLPRCILYAHYLDFCRKEKLDPACAATFGKTIRQKFPLLTTRRLGTRGHSKYHYYGIGIKESSAYYHSVYSGKGLTRFSGSKLKNEGGFTRKYSLSSKTGTLLPEFPSAQHLVLQDSVSKEKVDTLIMMYKTHCQCILDNAINVNFEEIQNFLLHFWQGMPEHLLPLLENPVIVDIFCVCDSILYKVLTDVLIPATMQDMPESLLADIRNFAKHWEHWMLSSLENLPEILSEKKVPIARRFVSSLKRQTSFLHLAQIARPALFDQIVVTSMVNDIDKVDLNSIGSQALLSVTNDQDSDFYSEYDSISVFQELKDLLRKNATVESFIEWLDSVVEQKVIKPSKQNGRSVKKRAQDFLLKWSFFGARVMHNLTLNNATSFGSFHLIRMLLDEYILLAIETQFNNDKEQDLQNLLEKYMRSADASKATFTASPSSCFLANRNKPGVSSSDSAVKDEIPPEDDYLTLAAAQQGLGAGTVVYHSADPDNFTIAGQMDFSQNSAPLMTPPISPAMMNRSSVINQGPMAMRPQTSCPIQGQLPCQTFPEPLYQSLHNPPSGSYPNASYYQPMFRTQTHTESGRYAFSGHHLSKDCFSNSCTASPYGTRGSSGGYTAAGDAGMETEAVQMLESSGFGFGGTTGAADGCSGPVCSSGHRYYGSSSGYVDAPRMGTFIDQHVSVISSVSSIRSVSAYAEAHDPLNILDDTSRKTRPYYTELSAMGTHTAGSSIAHSCSVSAPCMYGAPAPYHSQNTLLPLQGATEIREMMSSLPPINTVFMGSTSGPP</sequence>
<accession>Q5RJA1</accession>
<protein>
    <recommendedName>
        <fullName>DNA-binding protein RFX6</fullName>
    </recommendedName>
    <alternativeName>
        <fullName>Regulatory factor X 6</fullName>
    </alternativeName>
</protein>
<keyword id="KW-0217">Developmental protein</keyword>
<keyword id="KW-0221">Differentiation</keyword>
<keyword id="KW-0238">DNA-binding</keyword>
<keyword id="KW-0539">Nucleus</keyword>
<keyword id="KW-1185">Reference proteome</keyword>
<keyword id="KW-0804">Transcription</keyword>
<keyword id="KW-0805">Transcription regulation</keyword>